<gene>
    <name type="primary">GUA1</name>
    <name type="ordered locus">AER350W</name>
</gene>
<evidence type="ECO:0000250" key="1">
    <source>
        <dbReference type="UniProtKB" id="P38625"/>
    </source>
</evidence>
<evidence type="ECO:0000250" key="2">
    <source>
        <dbReference type="UniProtKB" id="P49915"/>
    </source>
</evidence>
<evidence type="ECO:0000250" key="3">
    <source>
        <dbReference type="UniProtKB" id="Q4WFT3"/>
    </source>
</evidence>
<evidence type="ECO:0000250" key="4">
    <source>
        <dbReference type="UniProtKB" id="Q9P772"/>
    </source>
</evidence>
<evidence type="ECO:0000255" key="5">
    <source>
        <dbReference type="PROSITE-ProRule" id="PRU00605"/>
    </source>
</evidence>
<evidence type="ECO:0000255" key="6">
    <source>
        <dbReference type="PROSITE-ProRule" id="PRU00886"/>
    </source>
</evidence>
<dbReference type="EC" id="6.3.5.2" evidence="1"/>
<dbReference type="EMBL" id="AE016818">
    <property type="protein sequence ID" value="AAS53030.1"/>
    <property type="molecule type" value="Genomic_DNA"/>
</dbReference>
<dbReference type="RefSeq" id="NP_985206.1">
    <property type="nucleotide sequence ID" value="NM_210560.1"/>
</dbReference>
<dbReference type="SMR" id="Q756B7"/>
<dbReference type="FunCoup" id="Q756B7">
    <property type="interactions" value="1108"/>
</dbReference>
<dbReference type="STRING" id="284811.Q756B7"/>
<dbReference type="MEROPS" id="C26.957"/>
<dbReference type="EnsemblFungi" id="AAS53030">
    <property type="protein sequence ID" value="AAS53030"/>
    <property type="gene ID" value="AGOS_AER350W"/>
</dbReference>
<dbReference type="GeneID" id="4621421"/>
<dbReference type="KEGG" id="ago:AGOS_AER350W"/>
<dbReference type="eggNOG" id="KOG1622">
    <property type="taxonomic scope" value="Eukaryota"/>
</dbReference>
<dbReference type="HOGENOM" id="CLU_014340_0_5_1"/>
<dbReference type="InParanoid" id="Q756B7"/>
<dbReference type="OMA" id="IWQSFAV"/>
<dbReference type="OrthoDB" id="1724632at2759"/>
<dbReference type="UniPathway" id="UPA00189">
    <property type="reaction ID" value="UER00296"/>
</dbReference>
<dbReference type="Proteomes" id="UP000000591">
    <property type="component" value="Chromosome V"/>
</dbReference>
<dbReference type="GO" id="GO:0005829">
    <property type="term" value="C:cytosol"/>
    <property type="evidence" value="ECO:0000318"/>
    <property type="project" value="GO_Central"/>
</dbReference>
<dbReference type="GO" id="GO:0005524">
    <property type="term" value="F:ATP binding"/>
    <property type="evidence" value="ECO:0007669"/>
    <property type="project" value="UniProtKB-KW"/>
</dbReference>
<dbReference type="GO" id="GO:0003922">
    <property type="term" value="F:GMP synthase (glutamine-hydrolyzing) activity"/>
    <property type="evidence" value="ECO:0000250"/>
    <property type="project" value="UniProtKB"/>
</dbReference>
<dbReference type="GO" id="GO:0003921">
    <property type="term" value="F:GMP synthase activity"/>
    <property type="evidence" value="ECO:0000318"/>
    <property type="project" value="GO_Central"/>
</dbReference>
<dbReference type="GO" id="GO:0006177">
    <property type="term" value="P:GMP biosynthetic process"/>
    <property type="evidence" value="ECO:0000250"/>
    <property type="project" value="UniProtKB"/>
</dbReference>
<dbReference type="CDD" id="cd01742">
    <property type="entry name" value="GATase1_GMP_Synthase"/>
    <property type="match status" value="1"/>
</dbReference>
<dbReference type="CDD" id="cd01997">
    <property type="entry name" value="GMP_synthase_C"/>
    <property type="match status" value="1"/>
</dbReference>
<dbReference type="FunFam" id="3.30.300.10:FF:000002">
    <property type="entry name" value="GMP synthase [glutamine-hydrolyzing]"/>
    <property type="match status" value="1"/>
</dbReference>
<dbReference type="FunFam" id="3.40.50.620:FF:000001">
    <property type="entry name" value="GMP synthase [glutamine-hydrolyzing]"/>
    <property type="match status" value="1"/>
</dbReference>
<dbReference type="FunFam" id="3.40.50.880:FF:000001">
    <property type="entry name" value="GMP synthase [glutamine-hydrolyzing]"/>
    <property type="match status" value="1"/>
</dbReference>
<dbReference type="Gene3D" id="3.30.300.10">
    <property type="match status" value="1"/>
</dbReference>
<dbReference type="Gene3D" id="3.40.50.880">
    <property type="match status" value="1"/>
</dbReference>
<dbReference type="Gene3D" id="3.40.50.620">
    <property type="entry name" value="HUPs"/>
    <property type="match status" value="1"/>
</dbReference>
<dbReference type="HAMAP" id="MF_00344">
    <property type="entry name" value="GMP_synthase"/>
    <property type="match status" value="1"/>
</dbReference>
<dbReference type="InterPro" id="IPR029062">
    <property type="entry name" value="Class_I_gatase-like"/>
</dbReference>
<dbReference type="InterPro" id="IPR017926">
    <property type="entry name" value="GATASE"/>
</dbReference>
<dbReference type="InterPro" id="IPR001674">
    <property type="entry name" value="GMP_synth_C"/>
</dbReference>
<dbReference type="InterPro" id="IPR004739">
    <property type="entry name" value="GMP_synth_GATase"/>
</dbReference>
<dbReference type="InterPro" id="IPR022955">
    <property type="entry name" value="GMP_synthase"/>
</dbReference>
<dbReference type="InterPro" id="IPR025777">
    <property type="entry name" value="GMPS_ATP_PPase_dom"/>
</dbReference>
<dbReference type="InterPro" id="IPR022310">
    <property type="entry name" value="NAD/GMP_synthase"/>
</dbReference>
<dbReference type="InterPro" id="IPR014729">
    <property type="entry name" value="Rossmann-like_a/b/a_fold"/>
</dbReference>
<dbReference type="NCBIfam" id="TIGR00884">
    <property type="entry name" value="guaA_Cterm"/>
    <property type="match status" value="1"/>
</dbReference>
<dbReference type="NCBIfam" id="TIGR00888">
    <property type="entry name" value="guaA_Nterm"/>
    <property type="match status" value="1"/>
</dbReference>
<dbReference type="NCBIfam" id="NF000848">
    <property type="entry name" value="PRK00074.1"/>
    <property type="match status" value="1"/>
</dbReference>
<dbReference type="PANTHER" id="PTHR11922:SF2">
    <property type="entry name" value="GMP SYNTHASE [GLUTAMINE-HYDROLYZING]"/>
    <property type="match status" value="1"/>
</dbReference>
<dbReference type="PANTHER" id="PTHR11922">
    <property type="entry name" value="GMP SYNTHASE-RELATED"/>
    <property type="match status" value="1"/>
</dbReference>
<dbReference type="Pfam" id="PF00117">
    <property type="entry name" value="GATase"/>
    <property type="match status" value="1"/>
</dbReference>
<dbReference type="Pfam" id="PF00958">
    <property type="entry name" value="GMP_synt_C"/>
    <property type="match status" value="1"/>
</dbReference>
<dbReference type="Pfam" id="PF02540">
    <property type="entry name" value="NAD_synthase"/>
    <property type="match status" value="1"/>
</dbReference>
<dbReference type="PRINTS" id="PR00097">
    <property type="entry name" value="ANTSNTHASEII"/>
</dbReference>
<dbReference type="PRINTS" id="PR00096">
    <property type="entry name" value="GATASE"/>
</dbReference>
<dbReference type="SUPFAM" id="SSF52402">
    <property type="entry name" value="Adenine nucleotide alpha hydrolases-like"/>
    <property type="match status" value="1"/>
</dbReference>
<dbReference type="SUPFAM" id="SSF52317">
    <property type="entry name" value="Class I glutamine amidotransferase-like"/>
    <property type="match status" value="1"/>
</dbReference>
<dbReference type="SUPFAM" id="SSF54810">
    <property type="entry name" value="GMP synthetase C-terminal dimerisation domain"/>
    <property type="match status" value="1"/>
</dbReference>
<dbReference type="PROSITE" id="PS51273">
    <property type="entry name" value="GATASE_TYPE_1"/>
    <property type="match status" value="1"/>
</dbReference>
<dbReference type="PROSITE" id="PS51553">
    <property type="entry name" value="GMPS_ATP_PPASE"/>
    <property type="match status" value="1"/>
</dbReference>
<keyword id="KW-0067">ATP-binding</keyword>
<keyword id="KW-0963">Cytoplasm</keyword>
<keyword id="KW-0315">Glutamine amidotransferase</keyword>
<keyword id="KW-0332">GMP biosynthesis</keyword>
<keyword id="KW-0436">Ligase</keyword>
<keyword id="KW-0460">Magnesium</keyword>
<keyword id="KW-0547">Nucleotide-binding</keyword>
<keyword id="KW-0658">Purine biosynthesis</keyword>
<keyword id="KW-1185">Reference proteome</keyword>
<accession>Q756B7</accession>
<name>GUAA_EREGS</name>
<protein>
    <recommendedName>
        <fullName>GMP synthase [glutamine-hydrolyzing]</fullName>
        <ecNumber evidence="1">6.3.5.2</ecNumber>
    </recommendedName>
    <alternativeName>
        <fullName>GMP synthetase</fullName>
    </alternativeName>
    <alternativeName>
        <fullName>Glutamine amidotransferase</fullName>
    </alternativeName>
</protein>
<comment type="function">
    <text evidence="1">Catalyzes the conversion of xanthine monophosphate (XMP) to GMP in the presence of glutamine and ATP through an adenyl-XMP intermediate.</text>
</comment>
<comment type="catalytic activity">
    <reaction evidence="1">
        <text>XMP + L-glutamine + ATP + H2O = GMP + L-glutamate + AMP + diphosphate + 2 H(+)</text>
        <dbReference type="Rhea" id="RHEA:11680"/>
        <dbReference type="ChEBI" id="CHEBI:15377"/>
        <dbReference type="ChEBI" id="CHEBI:15378"/>
        <dbReference type="ChEBI" id="CHEBI:29985"/>
        <dbReference type="ChEBI" id="CHEBI:30616"/>
        <dbReference type="ChEBI" id="CHEBI:33019"/>
        <dbReference type="ChEBI" id="CHEBI:57464"/>
        <dbReference type="ChEBI" id="CHEBI:58115"/>
        <dbReference type="ChEBI" id="CHEBI:58359"/>
        <dbReference type="ChEBI" id="CHEBI:456215"/>
        <dbReference type="EC" id="6.3.5.2"/>
    </reaction>
</comment>
<comment type="cofactor">
    <cofactor evidence="3">
        <name>Mg(2+)</name>
        <dbReference type="ChEBI" id="CHEBI:18420"/>
    </cofactor>
</comment>
<comment type="pathway">
    <text evidence="1">Purine metabolism; GMP biosynthesis; GMP from XMP (L-Gln route): step 1/1.</text>
</comment>
<comment type="subunit">
    <text evidence="3">Homodimer.</text>
</comment>
<comment type="subcellular location">
    <subcellularLocation>
        <location evidence="4">Cytoplasm</location>
        <location evidence="4">Cytosol</location>
    </subcellularLocation>
</comment>
<sequence length="525" mass="58202">MAAVEQVSSVFDTILVLDFGSQYSHLITRRLREFNVYAEMLPCTQKISELGWKPKGVILSGGPYSVYAADAPHVDRAVFELGVPILGICYGLQELAWIAGAEVGRGEKREYGRATLHVEDSACPLFNNVDSSTVWMSHGDKLHALPADFHVTATTENSPFCGIAHDSKPIFGIQFHPEVTHSSQGKTLLKNFAVEICQAAQTWTMENFIDTEIQRIRTLVGPTAEVIGAVSGGVDSTVAAKLMTEAIGDRFHAILVDNGVLRLNEAANVKKILGEGLGINLTVVDASEEFLTKLKGVTDPEKKRKIIGNTFIHVFEREAARIQPKNGEEIEFLLQGTLYPDVIESISFKGPSQTIKTHHNVGGLLDNMKLKLIEPLRELFKDEVRHLGELLGISHELVWRHPFPGPGIAIRVLGEVTKEQVEIARKADHIYIEEIRKAGLYNKISQAFACLLPVKSVGVMGDQRTYDQVIALRAIETTDFMTADWYPFEHEFLKHVASRIVNEVEGVARVTYDITSKPPATVEWE</sequence>
<reference key="1">
    <citation type="journal article" date="2004" name="Science">
        <title>The Ashbya gossypii genome as a tool for mapping the ancient Saccharomyces cerevisiae genome.</title>
        <authorList>
            <person name="Dietrich F.S."/>
            <person name="Voegeli S."/>
            <person name="Brachat S."/>
            <person name="Lerch A."/>
            <person name="Gates K."/>
            <person name="Steiner S."/>
            <person name="Mohr C."/>
            <person name="Poehlmann R."/>
            <person name="Luedi P."/>
            <person name="Choi S."/>
            <person name="Wing R.A."/>
            <person name="Flavier A."/>
            <person name="Gaffney T.D."/>
            <person name="Philippsen P."/>
        </authorList>
    </citation>
    <scope>NUCLEOTIDE SEQUENCE [LARGE SCALE GENOMIC DNA]</scope>
    <source>
        <strain>ATCC 10895 / CBS 109.51 / FGSC 9923 / NRRL Y-1056</strain>
    </source>
</reference>
<reference key="2">
    <citation type="journal article" date="2013" name="G3 (Bethesda)">
        <title>Genomes of Ashbya fungi isolated from insects reveal four mating-type loci, numerous translocations, lack of transposons, and distinct gene duplications.</title>
        <authorList>
            <person name="Dietrich F.S."/>
            <person name="Voegeli S."/>
            <person name="Kuo S."/>
            <person name="Philippsen P."/>
        </authorList>
    </citation>
    <scope>GENOME REANNOTATION</scope>
    <source>
        <strain>ATCC 10895 / CBS 109.51 / FGSC 9923 / NRRL Y-1056</strain>
    </source>
</reference>
<feature type="chain" id="PRO_0000286143" description="GMP synthase [glutamine-hydrolyzing]">
    <location>
        <begin position="1"/>
        <end position="525"/>
    </location>
</feature>
<feature type="domain" description="Glutamine amidotransferase type-1" evidence="5">
    <location>
        <begin position="13"/>
        <end position="202"/>
    </location>
</feature>
<feature type="domain" description="GMPS ATP-PPase" evidence="6">
    <location>
        <begin position="203"/>
        <end position="400"/>
    </location>
</feature>
<feature type="active site" description="Nucleophile" evidence="5">
    <location>
        <position position="89"/>
    </location>
</feature>
<feature type="active site" evidence="5">
    <location>
        <position position="176"/>
    </location>
</feature>
<feature type="active site" evidence="5">
    <location>
        <position position="178"/>
    </location>
</feature>
<feature type="binding site" evidence="6">
    <location>
        <begin position="231"/>
        <end position="237"/>
    </location>
    <ligand>
        <name>ATP</name>
        <dbReference type="ChEBI" id="CHEBI:30616"/>
    </ligand>
</feature>
<feature type="binding site" evidence="2">
    <location>
        <position position="304"/>
    </location>
    <ligand>
        <name>XMP</name>
        <dbReference type="ChEBI" id="CHEBI:57464"/>
    </ligand>
</feature>
<feature type="binding site" evidence="2">
    <location>
        <position position="462"/>
    </location>
    <ligand>
        <name>XMP</name>
        <dbReference type="ChEBI" id="CHEBI:57464"/>
    </ligand>
</feature>
<feature type="binding site" evidence="2">
    <location>
        <position position="517"/>
    </location>
    <ligand>
        <name>XMP</name>
        <dbReference type="ChEBI" id="CHEBI:57464"/>
    </ligand>
</feature>
<feature type="binding site" evidence="2">
    <location>
        <position position="523"/>
    </location>
    <ligand>
        <name>XMP</name>
        <dbReference type="ChEBI" id="CHEBI:57464"/>
    </ligand>
</feature>
<organism>
    <name type="scientific">Eremothecium gossypii (strain ATCC 10895 / CBS 109.51 / FGSC 9923 / NRRL Y-1056)</name>
    <name type="common">Yeast</name>
    <name type="synonym">Ashbya gossypii</name>
    <dbReference type="NCBI Taxonomy" id="284811"/>
    <lineage>
        <taxon>Eukaryota</taxon>
        <taxon>Fungi</taxon>
        <taxon>Dikarya</taxon>
        <taxon>Ascomycota</taxon>
        <taxon>Saccharomycotina</taxon>
        <taxon>Saccharomycetes</taxon>
        <taxon>Saccharomycetales</taxon>
        <taxon>Saccharomycetaceae</taxon>
        <taxon>Eremothecium</taxon>
    </lineage>
</organism>
<proteinExistence type="inferred from homology"/>